<reference key="1">
    <citation type="journal article" date="2001" name="Blood">
        <title>EAF1, a novel ELL-associated factor that is delocalized by expression of the MLL-ELL fusion protein.</title>
        <authorList>
            <person name="Simone F."/>
            <person name="Polak P.E."/>
            <person name="Kaberlein J.J."/>
            <person name="Luo R.T."/>
            <person name="Levitan D.A."/>
            <person name="Thirman M.J."/>
        </authorList>
    </citation>
    <scope>NUCLEOTIDE SEQUENCE [MRNA] (ISOFORM 1)</scope>
    <scope>FUNCTION</scope>
    <scope>INTERACTION WITH ELL AND ELL2</scope>
    <scope>TISSUE SPECIFICITY</scope>
    <scope>SUBCELLULAR LOCATION</scope>
    <source>
        <tissue>Bone marrow</tissue>
    </source>
</reference>
<reference key="2">
    <citation type="journal article" date="2004" name="Nat. Genet.">
        <title>Complete sequencing and characterization of 21,243 full-length human cDNAs.</title>
        <authorList>
            <person name="Ota T."/>
            <person name="Suzuki Y."/>
            <person name="Nishikawa T."/>
            <person name="Otsuki T."/>
            <person name="Sugiyama T."/>
            <person name="Irie R."/>
            <person name="Wakamatsu A."/>
            <person name="Hayashi K."/>
            <person name="Sato H."/>
            <person name="Nagai K."/>
            <person name="Kimura K."/>
            <person name="Makita H."/>
            <person name="Sekine M."/>
            <person name="Obayashi M."/>
            <person name="Nishi T."/>
            <person name="Shibahara T."/>
            <person name="Tanaka T."/>
            <person name="Ishii S."/>
            <person name="Yamamoto J."/>
            <person name="Saito K."/>
            <person name="Kawai Y."/>
            <person name="Isono Y."/>
            <person name="Nakamura Y."/>
            <person name="Nagahari K."/>
            <person name="Murakami K."/>
            <person name="Yasuda T."/>
            <person name="Iwayanagi T."/>
            <person name="Wagatsuma M."/>
            <person name="Shiratori A."/>
            <person name="Sudo H."/>
            <person name="Hosoiri T."/>
            <person name="Kaku Y."/>
            <person name="Kodaira H."/>
            <person name="Kondo H."/>
            <person name="Sugawara M."/>
            <person name="Takahashi M."/>
            <person name="Kanda K."/>
            <person name="Yokoi T."/>
            <person name="Furuya T."/>
            <person name="Kikkawa E."/>
            <person name="Omura Y."/>
            <person name="Abe K."/>
            <person name="Kamihara K."/>
            <person name="Katsuta N."/>
            <person name="Sato K."/>
            <person name="Tanikawa M."/>
            <person name="Yamazaki M."/>
            <person name="Ninomiya K."/>
            <person name="Ishibashi T."/>
            <person name="Yamashita H."/>
            <person name="Murakawa K."/>
            <person name="Fujimori K."/>
            <person name="Tanai H."/>
            <person name="Kimata M."/>
            <person name="Watanabe M."/>
            <person name="Hiraoka S."/>
            <person name="Chiba Y."/>
            <person name="Ishida S."/>
            <person name="Ono Y."/>
            <person name="Takiguchi S."/>
            <person name="Watanabe S."/>
            <person name="Yosida M."/>
            <person name="Hotuta T."/>
            <person name="Kusano J."/>
            <person name="Kanehori K."/>
            <person name="Takahashi-Fujii A."/>
            <person name="Hara H."/>
            <person name="Tanase T.-O."/>
            <person name="Nomura Y."/>
            <person name="Togiya S."/>
            <person name="Komai F."/>
            <person name="Hara R."/>
            <person name="Takeuchi K."/>
            <person name="Arita M."/>
            <person name="Imose N."/>
            <person name="Musashino K."/>
            <person name="Yuuki H."/>
            <person name="Oshima A."/>
            <person name="Sasaki N."/>
            <person name="Aotsuka S."/>
            <person name="Yoshikawa Y."/>
            <person name="Matsunawa H."/>
            <person name="Ichihara T."/>
            <person name="Shiohata N."/>
            <person name="Sano S."/>
            <person name="Moriya S."/>
            <person name="Momiyama H."/>
            <person name="Satoh N."/>
            <person name="Takami S."/>
            <person name="Terashima Y."/>
            <person name="Suzuki O."/>
            <person name="Nakagawa S."/>
            <person name="Senoh A."/>
            <person name="Mizoguchi H."/>
            <person name="Goto Y."/>
            <person name="Shimizu F."/>
            <person name="Wakebe H."/>
            <person name="Hishigaki H."/>
            <person name="Watanabe T."/>
            <person name="Sugiyama A."/>
            <person name="Takemoto M."/>
            <person name="Kawakami B."/>
            <person name="Yamazaki M."/>
            <person name="Watanabe K."/>
            <person name="Kumagai A."/>
            <person name="Itakura S."/>
            <person name="Fukuzumi Y."/>
            <person name="Fujimori Y."/>
            <person name="Komiyama M."/>
            <person name="Tashiro H."/>
            <person name="Tanigami A."/>
            <person name="Fujiwara T."/>
            <person name="Ono T."/>
            <person name="Yamada K."/>
            <person name="Fujii Y."/>
            <person name="Ozaki K."/>
            <person name="Hirao M."/>
            <person name="Ohmori Y."/>
            <person name="Kawabata A."/>
            <person name="Hikiji T."/>
            <person name="Kobatake N."/>
            <person name="Inagaki H."/>
            <person name="Ikema Y."/>
            <person name="Okamoto S."/>
            <person name="Okitani R."/>
            <person name="Kawakami T."/>
            <person name="Noguchi S."/>
            <person name="Itoh T."/>
            <person name="Shigeta K."/>
            <person name="Senba T."/>
            <person name="Matsumura K."/>
            <person name="Nakajima Y."/>
            <person name="Mizuno T."/>
            <person name="Morinaga M."/>
            <person name="Sasaki M."/>
            <person name="Togashi T."/>
            <person name="Oyama M."/>
            <person name="Hata H."/>
            <person name="Watanabe M."/>
            <person name="Komatsu T."/>
            <person name="Mizushima-Sugano J."/>
            <person name="Satoh T."/>
            <person name="Shirai Y."/>
            <person name="Takahashi Y."/>
            <person name="Nakagawa K."/>
            <person name="Okumura K."/>
            <person name="Nagase T."/>
            <person name="Nomura N."/>
            <person name="Kikuchi H."/>
            <person name="Masuho Y."/>
            <person name="Yamashita R."/>
            <person name="Nakai K."/>
            <person name="Yada T."/>
            <person name="Nakamura Y."/>
            <person name="Ohara O."/>
            <person name="Isogai T."/>
            <person name="Sugano S."/>
        </authorList>
    </citation>
    <scope>NUCLEOTIDE SEQUENCE [LARGE SCALE MRNA] (ISOFORM 2)</scope>
    <source>
        <tissue>Uterus</tissue>
    </source>
</reference>
<reference key="3">
    <citation type="journal article" date="2006" name="Nature">
        <title>The DNA sequence, annotation and analysis of human chromosome 3.</title>
        <authorList>
            <person name="Muzny D.M."/>
            <person name="Scherer S.E."/>
            <person name="Kaul R."/>
            <person name="Wang J."/>
            <person name="Yu J."/>
            <person name="Sudbrak R."/>
            <person name="Buhay C.J."/>
            <person name="Chen R."/>
            <person name="Cree A."/>
            <person name="Ding Y."/>
            <person name="Dugan-Rocha S."/>
            <person name="Gill R."/>
            <person name="Gunaratne P."/>
            <person name="Harris R.A."/>
            <person name="Hawes A.C."/>
            <person name="Hernandez J."/>
            <person name="Hodgson A.V."/>
            <person name="Hume J."/>
            <person name="Jackson A."/>
            <person name="Khan Z.M."/>
            <person name="Kovar-Smith C."/>
            <person name="Lewis L.R."/>
            <person name="Lozado R.J."/>
            <person name="Metzker M.L."/>
            <person name="Milosavljevic A."/>
            <person name="Miner G.R."/>
            <person name="Morgan M.B."/>
            <person name="Nazareth L.V."/>
            <person name="Scott G."/>
            <person name="Sodergren E."/>
            <person name="Song X.-Z."/>
            <person name="Steffen D."/>
            <person name="Wei S."/>
            <person name="Wheeler D.A."/>
            <person name="Wright M.W."/>
            <person name="Worley K.C."/>
            <person name="Yuan Y."/>
            <person name="Zhang Z."/>
            <person name="Adams C.Q."/>
            <person name="Ansari-Lari M.A."/>
            <person name="Ayele M."/>
            <person name="Brown M.J."/>
            <person name="Chen G."/>
            <person name="Chen Z."/>
            <person name="Clendenning J."/>
            <person name="Clerc-Blankenburg K.P."/>
            <person name="Chen R."/>
            <person name="Chen Z."/>
            <person name="Davis C."/>
            <person name="Delgado O."/>
            <person name="Dinh H.H."/>
            <person name="Dong W."/>
            <person name="Draper H."/>
            <person name="Ernst S."/>
            <person name="Fu G."/>
            <person name="Gonzalez-Garay M.L."/>
            <person name="Garcia D.K."/>
            <person name="Gillett W."/>
            <person name="Gu J."/>
            <person name="Hao B."/>
            <person name="Haugen E."/>
            <person name="Havlak P."/>
            <person name="He X."/>
            <person name="Hennig S."/>
            <person name="Hu S."/>
            <person name="Huang W."/>
            <person name="Jackson L.R."/>
            <person name="Jacob L.S."/>
            <person name="Kelly S.H."/>
            <person name="Kube M."/>
            <person name="Levy R."/>
            <person name="Li Z."/>
            <person name="Liu B."/>
            <person name="Liu J."/>
            <person name="Liu W."/>
            <person name="Lu J."/>
            <person name="Maheshwari M."/>
            <person name="Nguyen B.-V."/>
            <person name="Okwuonu G.O."/>
            <person name="Palmeiri A."/>
            <person name="Pasternak S."/>
            <person name="Perez L.M."/>
            <person name="Phelps K.A."/>
            <person name="Plopper F.J."/>
            <person name="Qiang B."/>
            <person name="Raymond C."/>
            <person name="Rodriguez R."/>
            <person name="Saenphimmachak C."/>
            <person name="Santibanez J."/>
            <person name="Shen H."/>
            <person name="Shen Y."/>
            <person name="Subramanian S."/>
            <person name="Tabor P.E."/>
            <person name="Verduzco D."/>
            <person name="Waldron L."/>
            <person name="Wang J."/>
            <person name="Wang J."/>
            <person name="Wang Q."/>
            <person name="Williams G.A."/>
            <person name="Wong G.K.-S."/>
            <person name="Yao Z."/>
            <person name="Zhang J."/>
            <person name="Zhang X."/>
            <person name="Zhao G."/>
            <person name="Zhou J."/>
            <person name="Zhou Y."/>
            <person name="Nelson D."/>
            <person name="Lehrach H."/>
            <person name="Reinhardt R."/>
            <person name="Naylor S.L."/>
            <person name="Yang H."/>
            <person name="Olson M."/>
            <person name="Weinstock G."/>
            <person name="Gibbs R.A."/>
        </authorList>
    </citation>
    <scope>NUCLEOTIDE SEQUENCE [LARGE SCALE GENOMIC DNA]</scope>
</reference>
<reference key="4">
    <citation type="journal article" date="2004" name="Genome Res.">
        <title>The status, quality, and expansion of the NIH full-length cDNA project: the Mammalian Gene Collection (MGC).</title>
        <authorList>
            <consortium name="The MGC Project Team"/>
        </authorList>
    </citation>
    <scope>NUCLEOTIDE SEQUENCE [LARGE SCALE MRNA] (ISOFORM 1)</scope>
    <source>
        <tissue>Brain</tissue>
    </source>
</reference>
<reference key="5">
    <citation type="journal article" date="2003" name="Mol. Biol. Cell">
        <title>ELL and EAF1 are Cajal body components that are disrupted in MLL-ELL leukemia.</title>
        <authorList>
            <person name="Polak P.E."/>
            <person name="Simone F."/>
            <person name="Kaberlein J.J."/>
            <person name="Luo R.T."/>
            <person name="Thirman M.J."/>
        </authorList>
    </citation>
    <scope>SUBCELLULAR LOCATION</scope>
</reference>
<reference key="6">
    <citation type="journal article" date="2005" name="Proc. Natl. Acad. Sci. U.S.A.">
        <title>ELL-associated factors 1 and 2 are positive regulators of RNA polymerase II elongation factor ELL.</title>
        <authorList>
            <person name="Kong S.E."/>
            <person name="Banks C.A."/>
            <person name="Shilatifard A."/>
            <person name="Conaway J.W."/>
            <person name="Conaway R.C."/>
        </authorList>
    </citation>
    <scope>FUNCTION</scope>
</reference>
<reference key="7">
    <citation type="journal article" date="2006" name="Cell">
        <title>Global, in vivo, and site-specific phosphorylation dynamics in signaling networks.</title>
        <authorList>
            <person name="Olsen J.V."/>
            <person name="Blagoev B."/>
            <person name="Gnad F."/>
            <person name="Macek B."/>
            <person name="Kumar C."/>
            <person name="Mortensen P."/>
            <person name="Mann M."/>
        </authorList>
    </citation>
    <scope>PHOSPHORYLATION [LARGE SCALE ANALYSIS] AT SER-165</scope>
    <scope>IDENTIFICATION BY MASS SPECTROMETRY [LARGE SCALE ANALYSIS]</scope>
    <source>
        <tissue>Cervix carcinoma</tissue>
    </source>
</reference>
<reference key="8">
    <citation type="journal article" date="2008" name="Mol. Cell">
        <title>Kinase-selective enrichment enables quantitative phosphoproteomics of the kinome across the cell cycle.</title>
        <authorList>
            <person name="Daub H."/>
            <person name="Olsen J.V."/>
            <person name="Bairlein M."/>
            <person name="Gnad F."/>
            <person name="Oppermann F.S."/>
            <person name="Korner R."/>
            <person name="Greff Z."/>
            <person name="Keri G."/>
            <person name="Stemmann O."/>
            <person name="Mann M."/>
        </authorList>
    </citation>
    <scope>PHOSPHORYLATION [LARGE SCALE ANALYSIS] AT SER-165</scope>
    <scope>IDENTIFICATION BY MASS SPECTROMETRY [LARGE SCALE ANALYSIS]</scope>
    <source>
        <tissue>Cervix carcinoma</tissue>
    </source>
</reference>
<reference key="9">
    <citation type="journal article" date="2008" name="Proc. Natl. Acad. Sci. U.S.A.">
        <title>A quantitative atlas of mitotic phosphorylation.</title>
        <authorList>
            <person name="Dephoure N."/>
            <person name="Zhou C."/>
            <person name="Villen J."/>
            <person name="Beausoleil S.A."/>
            <person name="Bakalarski C.E."/>
            <person name="Elledge S.J."/>
            <person name="Gygi S.P."/>
        </authorList>
    </citation>
    <scope>PHOSPHORYLATION [LARGE SCALE ANALYSIS] AT SER-165</scope>
    <scope>IDENTIFICATION BY MASS SPECTROMETRY [LARGE SCALE ANALYSIS]</scope>
    <source>
        <tissue>Cervix carcinoma</tissue>
    </source>
</reference>
<reference key="10">
    <citation type="journal article" date="2011" name="Mol. Cell">
        <title>The little elongation complex regulates small nuclear RNA transcription.</title>
        <authorList>
            <person name="Smith E.R."/>
            <person name="Lin C."/>
            <person name="Garrett A.S."/>
            <person name="Thornton J."/>
            <person name="Mohaghegh N."/>
            <person name="Hu D."/>
            <person name="Jackson J."/>
            <person name="Saraf A."/>
            <person name="Swanson S.K."/>
            <person name="Seidel C."/>
            <person name="Florens L."/>
            <person name="Washburn M.P."/>
            <person name="Eissenberg J.C."/>
            <person name="Shilatifard A."/>
        </authorList>
    </citation>
    <scope>IDENTIFICATION IN THE SEC COMPLEX</scope>
</reference>
<reference key="11">
    <citation type="journal article" date="2011" name="Sci. Signal.">
        <title>System-wide temporal characterization of the proteome and phosphoproteome of human embryonic stem cell differentiation.</title>
        <authorList>
            <person name="Rigbolt K.T."/>
            <person name="Prokhorova T.A."/>
            <person name="Akimov V."/>
            <person name="Henningsen J."/>
            <person name="Johansen P.T."/>
            <person name="Kratchmarova I."/>
            <person name="Kassem M."/>
            <person name="Mann M."/>
            <person name="Olsen J.V."/>
            <person name="Blagoev B."/>
        </authorList>
    </citation>
    <scope>PHOSPHORYLATION [LARGE SCALE ANALYSIS] AT SER-165</scope>
    <scope>IDENTIFICATION BY MASS SPECTROMETRY [LARGE SCALE ANALYSIS]</scope>
</reference>
<reference key="12">
    <citation type="journal article" date="2012" name="Nat. Rev. Mol. Cell Biol.">
        <title>The super elongation complex (SEC) family in transcriptional control.</title>
        <authorList>
            <person name="Luo Z."/>
            <person name="Lin C."/>
            <person name="Shilatifard A."/>
        </authorList>
    </citation>
    <scope>REVIEW ON THE SUPER ELONGATION COMPLEX</scope>
</reference>
<reference key="13">
    <citation type="journal article" date="2013" name="J. Proteome Res.">
        <title>Toward a comprehensive characterization of a human cancer cell phosphoproteome.</title>
        <authorList>
            <person name="Zhou H."/>
            <person name="Di Palma S."/>
            <person name="Preisinger C."/>
            <person name="Peng M."/>
            <person name="Polat A.N."/>
            <person name="Heck A.J."/>
            <person name="Mohammed S."/>
        </authorList>
    </citation>
    <scope>PHOSPHORYLATION [LARGE SCALE ANALYSIS] AT SER-165</scope>
    <scope>IDENTIFICATION BY MASS SPECTROMETRY [LARGE SCALE ANALYSIS]</scope>
    <source>
        <tissue>Cervix carcinoma</tissue>
        <tissue>Erythroleukemia</tissue>
    </source>
</reference>
<reference key="14">
    <citation type="journal article" date="2014" name="J. Proteomics">
        <title>An enzyme assisted RP-RPLC approach for in-depth analysis of human liver phosphoproteome.</title>
        <authorList>
            <person name="Bian Y."/>
            <person name="Song C."/>
            <person name="Cheng K."/>
            <person name="Dong M."/>
            <person name="Wang F."/>
            <person name="Huang J."/>
            <person name="Sun D."/>
            <person name="Wang L."/>
            <person name="Ye M."/>
            <person name="Zou H."/>
        </authorList>
    </citation>
    <scope>IDENTIFICATION BY MASS SPECTROMETRY [LARGE SCALE ANALYSIS]</scope>
    <source>
        <tissue>Liver</tissue>
    </source>
</reference>
<protein>
    <recommendedName>
        <fullName>ELL-associated factor 1</fullName>
    </recommendedName>
</protein>
<gene>
    <name type="primary">EAF1</name>
</gene>
<organism>
    <name type="scientific">Homo sapiens</name>
    <name type="common">Human</name>
    <dbReference type="NCBI Taxonomy" id="9606"/>
    <lineage>
        <taxon>Eukaryota</taxon>
        <taxon>Metazoa</taxon>
        <taxon>Chordata</taxon>
        <taxon>Craniata</taxon>
        <taxon>Vertebrata</taxon>
        <taxon>Euteleostomi</taxon>
        <taxon>Mammalia</taxon>
        <taxon>Eutheria</taxon>
        <taxon>Euarchontoglires</taxon>
        <taxon>Primates</taxon>
        <taxon>Haplorrhini</taxon>
        <taxon>Catarrhini</taxon>
        <taxon>Hominidae</taxon>
        <taxon>Homo</taxon>
    </lineage>
</organism>
<dbReference type="EMBL" id="AF272973">
    <property type="protein sequence ID" value="AAK58687.1"/>
    <property type="molecule type" value="mRNA"/>
</dbReference>
<dbReference type="EMBL" id="AK304697">
    <property type="protein sequence ID" value="BAG65467.1"/>
    <property type="molecule type" value="mRNA"/>
</dbReference>
<dbReference type="EMBL" id="AC027125">
    <property type="status" value="NOT_ANNOTATED_CDS"/>
    <property type="molecule type" value="Genomic_DNA"/>
</dbReference>
<dbReference type="EMBL" id="BC041329">
    <property type="protein sequence ID" value="AAH41329.1"/>
    <property type="molecule type" value="mRNA"/>
</dbReference>
<dbReference type="CCDS" id="CCDS2626.1">
    <molecule id="Q96JC9-1"/>
</dbReference>
<dbReference type="RefSeq" id="NP_149074.3">
    <molecule id="Q96JC9-1"/>
    <property type="nucleotide sequence ID" value="NM_033083.6"/>
</dbReference>
<dbReference type="RefSeq" id="XP_005265575.1">
    <property type="nucleotide sequence ID" value="XM_005265518.1"/>
</dbReference>
<dbReference type="RefSeq" id="XP_011532467.1">
    <molecule id="Q96JC9-2"/>
    <property type="nucleotide sequence ID" value="XM_011534165.2"/>
</dbReference>
<dbReference type="RefSeq" id="XP_011532468.1">
    <molecule id="Q96JC9-2"/>
    <property type="nucleotide sequence ID" value="XM_011534166.2"/>
</dbReference>
<dbReference type="RefSeq" id="XP_054204132.1">
    <molecule id="Q96JC9-2"/>
    <property type="nucleotide sequence ID" value="XM_054348157.1"/>
</dbReference>
<dbReference type="RefSeq" id="XP_054204133.1">
    <molecule id="Q96JC9-2"/>
    <property type="nucleotide sequence ID" value="XM_054348158.1"/>
</dbReference>
<dbReference type="PDB" id="7OKX">
    <property type="method" value="EM"/>
    <property type="resolution" value="3.30 A"/>
    <property type="chains" value="O=1-268"/>
</dbReference>
<dbReference type="PDB" id="7OKY">
    <property type="method" value="EM"/>
    <property type="resolution" value="4.14 A"/>
    <property type="chains" value="O=1-268"/>
</dbReference>
<dbReference type="PDBsum" id="7OKX"/>
<dbReference type="PDBsum" id="7OKY"/>
<dbReference type="EMDB" id="EMD-12966"/>
<dbReference type="EMDB" id="EMD-12967"/>
<dbReference type="EMDB" id="EMD-12968"/>
<dbReference type="EMDB" id="EMD-12969"/>
<dbReference type="EMDB" id="EMD-12970"/>
<dbReference type="EMDB" id="EMD-12971"/>
<dbReference type="EMDB" id="EMD-12972"/>
<dbReference type="EMDB" id="EMD-12973"/>
<dbReference type="SMR" id="Q96JC9"/>
<dbReference type="BioGRID" id="124514">
    <property type="interactions" value="127"/>
</dbReference>
<dbReference type="CORUM" id="Q96JC9"/>
<dbReference type="FunCoup" id="Q96JC9">
    <property type="interactions" value="2005"/>
</dbReference>
<dbReference type="IntAct" id="Q96JC9">
    <property type="interactions" value="96"/>
</dbReference>
<dbReference type="MINT" id="Q96JC9"/>
<dbReference type="STRING" id="9606.ENSP00000380054"/>
<dbReference type="GlyGen" id="Q96JC9">
    <property type="glycosylation" value="1 site, 1 N-linked glycan (1 site)"/>
</dbReference>
<dbReference type="iPTMnet" id="Q96JC9"/>
<dbReference type="PhosphoSitePlus" id="Q96JC9"/>
<dbReference type="BioMuta" id="EAF1"/>
<dbReference type="DMDM" id="73919265"/>
<dbReference type="jPOST" id="Q96JC9"/>
<dbReference type="MassIVE" id="Q96JC9"/>
<dbReference type="PaxDb" id="9606-ENSP00000380054"/>
<dbReference type="PeptideAtlas" id="Q96JC9"/>
<dbReference type="ProteomicsDB" id="5897"/>
<dbReference type="ProteomicsDB" id="76942">
    <molecule id="Q96JC9-1"/>
</dbReference>
<dbReference type="Pumba" id="Q96JC9"/>
<dbReference type="Antibodypedia" id="26754">
    <property type="antibodies" value="130 antibodies from 22 providers"/>
</dbReference>
<dbReference type="DNASU" id="85403"/>
<dbReference type="Ensembl" id="ENST00000396842.7">
    <molecule id="Q96JC9-1"/>
    <property type="protein sequence ID" value="ENSP00000380054.2"/>
    <property type="gene ID" value="ENSG00000144597.14"/>
</dbReference>
<dbReference type="GeneID" id="85403"/>
<dbReference type="KEGG" id="hsa:85403"/>
<dbReference type="MANE-Select" id="ENST00000396842.7">
    <property type="protein sequence ID" value="ENSP00000380054.2"/>
    <property type="RefSeq nucleotide sequence ID" value="NM_033083.7"/>
    <property type="RefSeq protein sequence ID" value="NP_149074.3"/>
</dbReference>
<dbReference type="UCSC" id="uc003bzu.4">
    <molecule id="Q96JC9-1"/>
    <property type="organism name" value="human"/>
</dbReference>
<dbReference type="AGR" id="HGNC:20907"/>
<dbReference type="CTD" id="85403"/>
<dbReference type="DisGeNET" id="85403"/>
<dbReference type="GeneCards" id="EAF1"/>
<dbReference type="HGNC" id="HGNC:20907">
    <property type="gene designation" value="EAF1"/>
</dbReference>
<dbReference type="HPA" id="ENSG00000144597">
    <property type="expression patterns" value="Tissue enhanced (bone)"/>
</dbReference>
<dbReference type="MIM" id="608315">
    <property type="type" value="gene"/>
</dbReference>
<dbReference type="neXtProt" id="NX_Q96JC9"/>
<dbReference type="OpenTargets" id="ENSG00000144597"/>
<dbReference type="PharmGKB" id="PA134897202"/>
<dbReference type="VEuPathDB" id="HostDB:ENSG00000144597"/>
<dbReference type="eggNOG" id="KOG4795">
    <property type="taxonomic scope" value="Eukaryota"/>
</dbReference>
<dbReference type="GeneTree" id="ENSGT00390000017724"/>
<dbReference type="HOGENOM" id="CLU_025755_0_0_1"/>
<dbReference type="InParanoid" id="Q96JC9"/>
<dbReference type="OMA" id="FRAPMKP"/>
<dbReference type="OrthoDB" id="125903at2759"/>
<dbReference type="PAN-GO" id="Q96JC9">
    <property type="GO annotations" value="4 GO annotations based on evolutionary models"/>
</dbReference>
<dbReference type="PhylomeDB" id="Q96JC9"/>
<dbReference type="TreeFam" id="TF320864"/>
<dbReference type="PathwayCommons" id="Q96JC9"/>
<dbReference type="Reactome" id="R-HSA-112382">
    <property type="pathway name" value="Formation of RNA Pol II elongation complex"/>
</dbReference>
<dbReference type="Reactome" id="R-HSA-674695">
    <property type="pathway name" value="RNA Polymerase II Pre-transcription Events"/>
</dbReference>
<dbReference type="Reactome" id="R-HSA-75955">
    <property type="pathway name" value="RNA Polymerase II Transcription Elongation"/>
</dbReference>
<dbReference type="SignaLink" id="Q96JC9"/>
<dbReference type="SIGNOR" id="Q96JC9"/>
<dbReference type="BioGRID-ORCS" id="85403">
    <property type="hits" value="276 hits in 1158 CRISPR screens"/>
</dbReference>
<dbReference type="CD-CODE" id="6F24707C">
    <property type="entry name" value="Cajal body"/>
</dbReference>
<dbReference type="CD-CODE" id="804901D1">
    <property type="entry name" value="Nuclear speckle"/>
</dbReference>
<dbReference type="ChiTaRS" id="EAF1">
    <property type="organism name" value="human"/>
</dbReference>
<dbReference type="GeneWiki" id="EAF1"/>
<dbReference type="GenomeRNAi" id="85403"/>
<dbReference type="Pharos" id="Q96JC9">
    <property type="development level" value="Tbio"/>
</dbReference>
<dbReference type="PRO" id="PR:Q96JC9"/>
<dbReference type="Proteomes" id="UP000005640">
    <property type="component" value="Chromosome 3"/>
</dbReference>
<dbReference type="RNAct" id="Q96JC9">
    <property type="molecule type" value="protein"/>
</dbReference>
<dbReference type="Bgee" id="ENSG00000144597">
    <property type="expression patterns" value="Expressed in amniotic fluid and 184 other cell types or tissues"/>
</dbReference>
<dbReference type="ExpressionAtlas" id="Q96JC9">
    <property type="expression patterns" value="baseline and differential"/>
</dbReference>
<dbReference type="GO" id="GO:0015030">
    <property type="term" value="C:Cajal body"/>
    <property type="evidence" value="ECO:0007669"/>
    <property type="project" value="UniProtKB-SubCell"/>
</dbReference>
<dbReference type="GO" id="GO:0045171">
    <property type="term" value="C:intercellular bridge"/>
    <property type="evidence" value="ECO:0000314"/>
    <property type="project" value="HPA"/>
</dbReference>
<dbReference type="GO" id="GO:0043231">
    <property type="term" value="C:intracellular membrane-bounded organelle"/>
    <property type="evidence" value="ECO:0000314"/>
    <property type="project" value="HPA"/>
</dbReference>
<dbReference type="GO" id="GO:0016604">
    <property type="term" value="C:nuclear body"/>
    <property type="evidence" value="ECO:0000314"/>
    <property type="project" value="HPA"/>
</dbReference>
<dbReference type="GO" id="GO:0016607">
    <property type="term" value="C:nuclear speck"/>
    <property type="evidence" value="ECO:0007669"/>
    <property type="project" value="UniProtKB-SubCell"/>
</dbReference>
<dbReference type="GO" id="GO:0005654">
    <property type="term" value="C:nucleoplasm"/>
    <property type="evidence" value="ECO:0000314"/>
    <property type="project" value="HPA"/>
</dbReference>
<dbReference type="GO" id="GO:0032783">
    <property type="term" value="C:super elongation complex"/>
    <property type="evidence" value="ECO:0007669"/>
    <property type="project" value="InterPro"/>
</dbReference>
<dbReference type="GO" id="GO:0008023">
    <property type="term" value="C:transcription elongation factor complex"/>
    <property type="evidence" value="ECO:0000314"/>
    <property type="project" value="UniProtKB"/>
</dbReference>
<dbReference type="GO" id="GO:0003711">
    <property type="term" value="F:transcription elongation factor activity"/>
    <property type="evidence" value="ECO:0000315"/>
    <property type="project" value="ARUK-UCL"/>
</dbReference>
<dbReference type="GO" id="GO:0034243">
    <property type="term" value="P:regulation of transcription elongation by RNA polymerase II"/>
    <property type="evidence" value="ECO:0000315"/>
    <property type="project" value="ARUK-UCL"/>
</dbReference>
<dbReference type="GO" id="GO:0006368">
    <property type="term" value="P:transcription elongation by RNA polymerase II"/>
    <property type="evidence" value="ECO:0000318"/>
    <property type="project" value="GO_Central"/>
</dbReference>
<dbReference type="InterPro" id="IPR027093">
    <property type="entry name" value="EAF_fam"/>
</dbReference>
<dbReference type="InterPro" id="IPR019194">
    <property type="entry name" value="Tscrpt_elong_fac_Eaf_N"/>
</dbReference>
<dbReference type="PANTHER" id="PTHR15970:SF8">
    <property type="entry name" value="ELL-ASSOCIATED FACTOR 1"/>
    <property type="match status" value="1"/>
</dbReference>
<dbReference type="PANTHER" id="PTHR15970">
    <property type="entry name" value="ELL-ASSOCIATED FACTOR EAF"/>
    <property type="match status" value="1"/>
</dbReference>
<dbReference type="Pfam" id="PF09816">
    <property type="entry name" value="EAF"/>
    <property type="match status" value="1"/>
</dbReference>
<accession>Q96JC9</accession>
<accession>B4E3F5</accession>
<accession>Q8IW10</accession>
<feature type="chain" id="PRO_0000130334" description="ELL-associated factor 1">
    <location>
        <begin position="1"/>
        <end position="268"/>
    </location>
</feature>
<feature type="region of interest" description="Disordered" evidence="1">
    <location>
        <begin position="106"/>
        <end position="268"/>
    </location>
</feature>
<feature type="region of interest" description="Necessary for transactivation activity">
    <location>
        <begin position="182"/>
        <end position="262"/>
    </location>
</feature>
<feature type="compositionally biased region" description="Pro residues" evidence="1">
    <location>
        <begin position="128"/>
        <end position="154"/>
    </location>
</feature>
<feature type="compositionally biased region" description="Basic and acidic residues" evidence="1">
    <location>
        <begin position="171"/>
        <end position="181"/>
    </location>
</feature>
<feature type="compositionally biased region" description="Low complexity" evidence="1">
    <location>
        <begin position="188"/>
        <end position="213"/>
    </location>
</feature>
<feature type="compositionally biased region" description="Polar residues" evidence="1">
    <location>
        <begin position="238"/>
        <end position="268"/>
    </location>
</feature>
<feature type="modified residue" description="Phosphoserine" evidence="8 9 10 11 12">
    <location>
        <position position="165"/>
    </location>
</feature>
<feature type="splice variant" id="VSP_056193" description="In isoform 2." evidence="6">
    <original>MNGTANPLLDR</original>
    <variation>MKSQLHCHISL</variation>
    <location>
        <begin position="1"/>
        <end position="11"/>
    </location>
</feature>
<feature type="splice variant" id="VSP_056194" description="In isoform 2." evidence="6">
    <location>
        <begin position="12"/>
        <end position="112"/>
    </location>
</feature>
<feature type="sequence conflict" description="In Ref. 4; AAH41329." evidence="7" ref="4">
    <original>Y</original>
    <variation>F</variation>
    <location>
        <position position="97"/>
    </location>
</feature>
<feature type="sequence conflict" description="In Ref. 4; AAH41329." evidence="7" ref="4">
    <original>T</original>
    <variation>A</variation>
    <location>
        <position position="252"/>
    </location>
</feature>
<feature type="helix" evidence="13">
    <location>
        <begin position="20"/>
        <end position="22"/>
    </location>
</feature>
<feature type="strand" evidence="13">
    <location>
        <begin position="23"/>
        <end position="25"/>
    </location>
</feature>
<feature type="strand" evidence="13">
    <location>
        <begin position="30"/>
        <end position="36"/>
    </location>
</feature>
<feature type="strand" evidence="13">
    <location>
        <begin position="44"/>
        <end position="46"/>
    </location>
</feature>
<feature type="strand" evidence="13">
    <location>
        <begin position="50"/>
        <end position="52"/>
    </location>
</feature>
<feature type="strand" evidence="13">
    <location>
        <begin position="57"/>
        <end position="60"/>
    </location>
</feature>
<feature type="strand" evidence="13">
    <location>
        <begin position="74"/>
        <end position="81"/>
    </location>
</feature>
<feature type="strand" evidence="13">
    <location>
        <begin position="83"/>
        <end position="91"/>
    </location>
</feature>
<feature type="turn" evidence="13">
    <location>
        <begin position="92"/>
        <end position="95"/>
    </location>
</feature>
<feature type="strand" evidence="13">
    <location>
        <begin position="96"/>
        <end position="100"/>
    </location>
</feature>
<feature type="strand" evidence="13">
    <location>
        <begin position="102"/>
        <end position="111"/>
    </location>
</feature>
<evidence type="ECO:0000256" key="1">
    <source>
        <dbReference type="SAM" id="MobiDB-lite"/>
    </source>
</evidence>
<evidence type="ECO:0000269" key="2">
    <source>
    </source>
</evidence>
<evidence type="ECO:0000269" key="3">
    <source>
    </source>
</evidence>
<evidence type="ECO:0000269" key="4">
    <source>
    </source>
</evidence>
<evidence type="ECO:0000269" key="5">
    <source>
    </source>
</evidence>
<evidence type="ECO:0000303" key="6">
    <source>
    </source>
</evidence>
<evidence type="ECO:0000305" key="7"/>
<evidence type="ECO:0007744" key="8">
    <source>
    </source>
</evidence>
<evidence type="ECO:0007744" key="9">
    <source>
    </source>
</evidence>
<evidence type="ECO:0007744" key="10">
    <source>
    </source>
</evidence>
<evidence type="ECO:0007744" key="11">
    <source>
    </source>
</evidence>
<evidence type="ECO:0007744" key="12">
    <source>
    </source>
</evidence>
<evidence type="ECO:0007829" key="13">
    <source>
        <dbReference type="PDB" id="7OKX"/>
    </source>
</evidence>
<sequence length="268" mass="29042">MNGTANPLLDREEHCLRLGESFEKRPRASFHTIRYDFKPASIDTSCEGELQVGKGDEVTITLPHIPGSTPPMTVFKGNKRPYQKDCVLIINHDTGEYVLEKLSSSIQVKKTRAEGSSKIQARMEQQPTRPPQTSQPPPPPPPMPFRAPTKPPVGPKTSPLKDNPSPEPQLDDIKRELRAEVDIIEQMSSSSGSSSSDSESSSGSDDDSSSSGGEDNGPASPPQPSHQQPYNSRPAVANGTSRPQGSNQLMNTLRNDLQLSESGSDSDD</sequence>
<comment type="function">
    <text evidence="2 4">Acts as a transcriptional transactivator of ELL and ELL2 elongation activities.</text>
</comment>
<comment type="subunit">
    <text evidence="2 5">Component of the super elongation complex (SEC), at least composed of EAF1, EAF2, CDK9, MLLT3/AF9, AFF (AFF1 or AFF4), the P-TEFb complex and ELL (ELL, ELL2 or ELL3). Interacts with ELL and ELL2.</text>
</comment>
<comment type="interaction">
    <interactant intactId="EBI-769261">
        <id>Q96JC9</id>
    </interactant>
    <interactant intactId="EBI-297683">
        <id>Q96CW1</id>
        <label>AP2M1</label>
    </interactant>
    <organismsDiffer>false</organismsDiffer>
    <experiments>5</experiments>
</comment>
<comment type="interaction">
    <interactant intactId="EBI-769261">
        <id>Q96JC9</id>
    </interactant>
    <interactant intactId="EBI-11957452">
        <id>Q4LE39-3</id>
        <label>ARID4B</label>
    </interactant>
    <organismsDiffer>false</organismsDiffer>
    <experiments>3</experiments>
</comment>
<comment type="interaction">
    <interactant intactId="EBI-769261">
        <id>Q96JC9</id>
    </interactant>
    <interactant intactId="EBI-10181188">
        <id>Q8N7W2-2</id>
        <label>BEND7</label>
    </interactant>
    <organismsDiffer>false</organismsDiffer>
    <experiments>3</experiments>
</comment>
<comment type="interaction">
    <interactant intactId="EBI-769261">
        <id>Q96JC9</id>
    </interactant>
    <interactant intactId="EBI-12235840">
        <id>Q8NCX0-3</id>
        <label>CCDC150</label>
    </interactant>
    <organismsDiffer>false</organismsDiffer>
    <experiments>3</experiments>
</comment>
<comment type="interaction">
    <interactant intactId="EBI-769261">
        <id>Q96JC9</id>
    </interactant>
    <interactant intactId="EBI-739624">
        <id>Q8NHQ1</id>
        <label>CEP70</label>
    </interactant>
    <organismsDiffer>false</organismsDiffer>
    <experiments>3</experiments>
</comment>
<comment type="interaction">
    <interactant intactId="EBI-769261">
        <id>Q96JC9</id>
    </interactant>
    <interactant intactId="EBI-742887">
        <id>Q8TAP6</id>
        <label>CEP76</label>
    </interactant>
    <organismsDiffer>false</organismsDiffer>
    <experiments>3</experiments>
</comment>
<comment type="interaction">
    <interactant intactId="EBI-769261">
        <id>Q96JC9</id>
    </interactant>
    <interactant intactId="EBI-2795449">
        <id>Q9H147</id>
        <label>DNTTIP1</label>
    </interactant>
    <organismsDiffer>false</organismsDiffer>
    <experiments>3</experiments>
</comment>
<comment type="interaction">
    <interactant intactId="EBI-769261">
        <id>Q96JC9</id>
    </interactant>
    <interactant intactId="EBI-710457">
        <id>Q7L190</id>
        <label>DPPA4</label>
    </interactant>
    <organismsDiffer>false</organismsDiffer>
    <experiments>3</experiments>
</comment>
<comment type="interaction">
    <interactant intactId="EBI-769261">
        <id>Q96JC9</id>
    </interactant>
    <interactant intactId="EBI-395274">
        <id>O00472</id>
        <label>ELL2</label>
    </interactant>
    <organismsDiffer>false</organismsDiffer>
    <experiments>9</experiments>
</comment>
<comment type="interaction">
    <interactant intactId="EBI-769261">
        <id>Q96JC9</id>
    </interactant>
    <interactant intactId="EBI-715224">
        <id>Q9HB65</id>
        <label>ELL3</label>
    </interactant>
    <organismsDiffer>false</organismsDiffer>
    <experiments>8</experiments>
</comment>
<comment type="interaction">
    <interactant intactId="EBI-769261">
        <id>Q96JC9</id>
    </interactant>
    <interactant intactId="EBI-12958227">
        <id>Q86W67</id>
        <label>FAM228A</label>
    </interactant>
    <organismsDiffer>false</organismsDiffer>
    <experiments>3</experiments>
</comment>
<comment type="interaction">
    <interactant intactId="EBI-769261">
        <id>Q96JC9</id>
    </interactant>
    <interactant intactId="EBI-372506">
        <id>Q8TAE8</id>
        <label>GADD45GIP1</label>
    </interactant>
    <organismsDiffer>false</organismsDiffer>
    <experiments>3</experiments>
</comment>
<comment type="interaction">
    <interactant intactId="EBI-769261">
        <id>Q96JC9</id>
    </interactant>
    <interactant intactId="EBI-1052570">
        <id>O95995</id>
        <label>GAS8</label>
    </interactant>
    <organismsDiffer>false</organismsDiffer>
    <experiments>3</experiments>
</comment>
<comment type="interaction">
    <interactant intactId="EBI-769261">
        <id>Q96JC9</id>
    </interactant>
    <interactant intactId="EBI-17857617">
        <id>Q5JQS6</id>
        <label>GCSAML</label>
    </interactant>
    <organismsDiffer>false</organismsDiffer>
    <experiments>3</experiments>
</comment>
<comment type="interaction">
    <interactant intactId="EBI-769261">
        <id>Q96JC9</id>
    </interactant>
    <interactant intactId="EBI-5916454">
        <id>A6NEM1</id>
        <label>GOLGA6L9</label>
    </interactant>
    <organismsDiffer>false</organismsDiffer>
    <experiments>3</experiments>
</comment>
<comment type="interaction">
    <interactant intactId="EBI-769261">
        <id>Q96JC9</id>
    </interactant>
    <interactant intactId="EBI-11519926">
        <id>Q6PI77</id>
        <label>GPRASP3</label>
    </interactant>
    <organismsDiffer>false</organismsDiffer>
    <experiments>3</experiments>
</comment>
<comment type="interaction">
    <interactant intactId="EBI-769261">
        <id>Q96JC9</id>
    </interactant>
    <interactant intactId="EBI-12827521">
        <id>Q8TE85-2</id>
        <label>GRHL3</label>
    </interactant>
    <organismsDiffer>false</organismsDiffer>
    <experiments>3</experiments>
</comment>
<comment type="interaction">
    <interactant intactId="EBI-769261">
        <id>Q96JC9</id>
    </interactant>
    <interactant intactId="EBI-715539">
        <id>P32780</id>
        <label>GTF2H1</label>
    </interactant>
    <organismsDiffer>false</organismsDiffer>
    <experiments>3</experiments>
</comment>
<comment type="interaction">
    <interactant intactId="EBI-769261">
        <id>Q96JC9</id>
    </interactant>
    <interactant intactId="EBI-6380495">
        <id>Q92759</id>
        <label>GTF2H4</label>
    </interactant>
    <organismsDiffer>false</organismsDiffer>
    <experiments>3</experiments>
</comment>
<comment type="interaction">
    <interactant intactId="EBI-769261">
        <id>Q96JC9</id>
    </interactant>
    <interactant intactId="EBI-748420">
        <id>Q9NSC5</id>
        <label>HOMER3</label>
    </interactant>
    <organismsDiffer>false</organismsDiffer>
    <experiments>7</experiments>
</comment>
<comment type="interaction">
    <interactant intactId="EBI-769261">
        <id>Q96JC9</id>
    </interactant>
    <interactant intactId="EBI-7116203">
        <id>O75031</id>
        <label>HSF2BP</label>
    </interactant>
    <organismsDiffer>false</organismsDiffer>
    <experiments>3</experiments>
</comment>
<comment type="interaction">
    <interactant intactId="EBI-769261">
        <id>Q96JC9</id>
    </interactant>
    <interactant intactId="EBI-751001">
        <id>Q14145</id>
        <label>KEAP1</label>
    </interactant>
    <organismsDiffer>false</organismsDiffer>
    <experiments>3</experiments>
</comment>
<comment type="interaction">
    <interactant intactId="EBI-769261">
        <id>Q96JC9</id>
    </interactant>
    <interactant intactId="EBI-3437878">
        <id>Q86T90</id>
        <label>KIAA1328</label>
    </interactant>
    <organismsDiffer>false</organismsDiffer>
    <experiments>3</experiments>
</comment>
<comment type="interaction">
    <interactant intactId="EBI-769261">
        <id>Q96JC9</id>
    </interactant>
    <interactant intactId="EBI-10268010">
        <id>Q8N8X9</id>
        <label>MAB21L3</label>
    </interactant>
    <organismsDiffer>false</organismsDiffer>
    <experiments>3</experiments>
</comment>
<comment type="interaction">
    <interactant intactId="EBI-769261">
        <id>Q96JC9</id>
    </interactant>
    <interactant intactId="EBI-394392">
        <id>O95402</id>
        <label>MED26</label>
    </interactant>
    <organismsDiffer>false</organismsDiffer>
    <experiments>5</experiments>
</comment>
<comment type="interaction">
    <interactant intactId="EBI-769261">
        <id>Q96JC9</id>
    </interactant>
    <interactant intactId="EBI-2548751">
        <id>Q8TD10</id>
        <label>MIPOL1</label>
    </interactant>
    <organismsDiffer>false</organismsDiffer>
    <experiments>3</experiments>
</comment>
<comment type="interaction">
    <interactant intactId="EBI-769261">
        <id>Q96JC9</id>
    </interactant>
    <interactant intactId="EBI-747278">
        <id>P26367</id>
        <label>PAX6</label>
    </interactant>
    <organismsDiffer>false</organismsDiffer>
    <experiments>3</experiments>
</comment>
<comment type="interaction">
    <interactant intactId="EBI-769261">
        <id>Q96JC9</id>
    </interactant>
    <interactant intactId="EBI-79165">
        <id>Q9NRD5</id>
        <label>PICK1</label>
    </interactant>
    <organismsDiffer>false</organismsDiffer>
    <experiments>3</experiments>
</comment>
<comment type="interaction">
    <interactant intactId="EBI-769261">
        <id>Q96JC9</id>
    </interactant>
    <interactant intactId="EBI-357318">
        <id>Q9NWS0</id>
        <label>PIH1D1</label>
    </interactant>
    <organismsDiffer>false</organismsDiffer>
    <experiments>3</experiments>
</comment>
<comment type="interaction">
    <interactant intactId="EBI-769261">
        <id>Q96JC9</id>
    </interactant>
    <interactant intactId="EBI-355546">
        <id>P61289</id>
        <label>PSME3</label>
    </interactant>
    <organismsDiffer>false</organismsDiffer>
    <experiments>9</experiments>
</comment>
<comment type="interaction">
    <interactant intactId="EBI-769261">
        <id>Q96JC9</id>
    </interactant>
    <interactant intactId="EBI-752324">
        <id>Q8N488</id>
        <label>RYBP</label>
    </interactant>
    <organismsDiffer>false</organismsDiffer>
    <experiments>3</experiments>
</comment>
<comment type="interaction">
    <interactant intactId="EBI-769261">
        <id>Q96JC9</id>
    </interactant>
    <interactant intactId="EBI-727004">
        <id>O00560</id>
        <label>SDCBP</label>
    </interactant>
    <organismsDiffer>false</organismsDiffer>
    <experiments>3</experiments>
</comment>
<comment type="interaction">
    <interactant intactId="EBI-769261">
        <id>Q96JC9</id>
    </interactant>
    <interactant intactId="EBI-12272118">
        <id>P04279-2</id>
        <label>SEMG1</label>
    </interactant>
    <organismsDiffer>false</organismsDiffer>
    <experiments>3</experiments>
</comment>
<comment type="interaction">
    <interactant intactId="EBI-769261">
        <id>Q96JC9</id>
    </interactant>
    <interactant intactId="EBI-353399">
        <id>P37108</id>
        <label>SRP14</label>
    </interactant>
    <organismsDiffer>false</organismsDiffer>
    <experiments>3</experiments>
</comment>
<comment type="interaction">
    <interactant intactId="EBI-769261">
        <id>Q96JC9</id>
    </interactant>
    <interactant intactId="EBI-745680">
        <id>Q96MF2</id>
        <label>STAC3</label>
    </interactant>
    <organismsDiffer>false</organismsDiffer>
    <experiments>5</experiments>
</comment>
<comment type="interaction">
    <interactant intactId="EBI-769261">
        <id>Q96JC9</id>
    </interactant>
    <interactant intactId="EBI-710310">
        <id>Q15560</id>
        <label>TCEA2</label>
    </interactant>
    <organismsDiffer>false</organismsDiffer>
    <experiments>3</experiments>
</comment>
<comment type="interaction">
    <interactant intactId="EBI-769261">
        <id>Q96JC9</id>
    </interactant>
    <interactant intactId="EBI-717422">
        <id>Q12800</id>
        <label>TFCP2</label>
    </interactant>
    <organismsDiffer>false</organismsDiffer>
    <experiments>3</experiments>
</comment>
<comment type="interaction">
    <interactant intactId="EBI-769261">
        <id>Q96JC9</id>
    </interactant>
    <interactant intactId="EBI-717810">
        <id>Q08117</id>
        <label>TLE5</label>
    </interactant>
    <organismsDiffer>false</organismsDiffer>
    <experiments>4</experiments>
</comment>
<comment type="interaction">
    <interactant intactId="EBI-769261">
        <id>Q96JC9</id>
    </interactant>
    <interactant intactId="EBI-1049336">
        <id>O95379</id>
        <label>TNFAIP8</label>
    </interactant>
    <organismsDiffer>false</organismsDiffer>
    <experiments>3</experiments>
</comment>
<comment type="interaction">
    <interactant intactId="EBI-769261">
        <id>Q96JC9</id>
    </interactant>
    <interactant intactId="EBI-746692">
        <id>P19237</id>
        <label>TNNI1</label>
    </interactant>
    <organismsDiffer>false</organismsDiffer>
    <experiments>3</experiments>
</comment>
<comment type="interaction">
    <interactant intactId="EBI-769261">
        <id>Q96JC9</id>
    </interactant>
    <interactant intactId="EBI-355744">
        <id>Q12933</id>
        <label>TRAF2</label>
    </interactant>
    <organismsDiffer>false</organismsDiffer>
    <experiments>3</experiments>
</comment>
<comment type="interaction">
    <interactant intactId="EBI-769261">
        <id>Q96JC9</id>
    </interactant>
    <interactant intactId="EBI-6929619">
        <id>Q9BVG3</id>
        <label>TRIM62</label>
    </interactant>
    <organismsDiffer>false</organismsDiffer>
    <experiments>3</experiments>
</comment>
<comment type="interaction">
    <interactant intactId="EBI-769261">
        <id>Q96JC9</id>
    </interactant>
    <interactant intactId="EBI-12227803">
        <id>Q5SQQ9-2</id>
        <label>VAX1</label>
    </interactant>
    <organismsDiffer>false</organismsDiffer>
    <experiments>3</experiments>
</comment>
<comment type="interaction">
    <interactant intactId="EBI-769261">
        <id>Q96JC9</id>
    </interactant>
    <interactant intactId="EBI-12111538">
        <id>Q8IY57-5</id>
        <label>YAF2</label>
    </interactant>
    <organismsDiffer>false</organismsDiffer>
    <experiments>5</experiments>
</comment>
<comment type="interaction">
    <interactant intactId="EBI-769261">
        <id>Q96JC9</id>
    </interactant>
    <interactant intactId="EBI-10176632">
        <id>O43829</id>
        <label>ZBTB14</label>
    </interactant>
    <organismsDiffer>false</organismsDiffer>
    <experiments>3</experiments>
</comment>
<comment type="interaction">
    <interactant intactId="EBI-769261">
        <id>Q96JC9</id>
    </interactant>
    <interactant intactId="EBI-2849334">
        <id>P52747</id>
        <label>ZNF143</label>
    </interactant>
    <organismsDiffer>false</organismsDiffer>
    <experiments>3</experiments>
</comment>
<comment type="interaction">
    <interactant intactId="EBI-769261">
        <id>Q96JC9</id>
    </interactant>
    <interactant intactId="EBI-751960">
        <id>O95125</id>
        <label>ZNF202</label>
    </interactant>
    <organismsDiffer>false</organismsDiffer>
    <experiments>3</experiments>
</comment>
<comment type="interaction">
    <interactant intactId="EBI-769261">
        <id>Q96JC9</id>
    </interactant>
    <interactant intactId="EBI-4395669">
        <id>Q6ZNG0</id>
        <label>ZNF620</label>
    </interactant>
    <organismsDiffer>false</organismsDiffer>
    <experiments>3</experiments>
</comment>
<comment type="subcellular location">
    <subcellularLocation>
        <location evidence="2">Nucleus speckle</location>
    </subcellularLocation>
    <subcellularLocation>
        <location evidence="3">Nucleus</location>
        <location evidence="3">Cajal body</location>
    </subcellularLocation>
</comment>
<comment type="alternative products">
    <event type="alternative splicing"/>
    <isoform>
        <id>Q96JC9-1</id>
        <name>1</name>
        <sequence type="displayed"/>
    </isoform>
    <isoform>
        <id>Q96JC9-2</id>
        <name>2</name>
        <sequence type="described" ref="VSP_056193 VSP_056194"/>
    </isoform>
</comment>
<comment type="tissue specificity">
    <text evidence="2">Strongly expressed in heart, brain, placenta, lung, liver, skeletal muscle, kidney, pancreas, spleen, prostate, testis, small intestine and colon. Poorly expressed in thymus.</text>
</comment>
<comment type="similarity">
    <text evidence="7">Belongs to the EAF family.</text>
</comment>
<proteinExistence type="evidence at protein level"/>
<keyword id="KW-0002">3D-structure</keyword>
<keyword id="KW-0010">Activator</keyword>
<keyword id="KW-0025">Alternative splicing</keyword>
<keyword id="KW-0539">Nucleus</keyword>
<keyword id="KW-0597">Phosphoprotein</keyword>
<keyword id="KW-1267">Proteomics identification</keyword>
<keyword id="KW-1185">Reference proteome</keyword>
<keyword id="KW-0804">Transcription</keyword>
<keyword id="KW-0805">Transcription regulation</keyword>
<name>EAF1_HUMAN</name>